<evidence type="ECO:0000250" key="1"/>
<evidence type="ECO:0000250" key="2">
    <source>
        <dbReference type="UniProtKB" id="P16671"/>
    </source>
</evidence>
<evidence type="ECO:0000250" key="3">
    <source>
        <dbReference type="UniProtKB" id="Q07969"/>
    </source>
</evidence>
<evidence type="ECO:0000250" key="4">
    <source>
        <dbReference type="UniProtKB" id="Q08857"/>
    </source>
</evidence>
<evidence type="ECO:0000255" key="5"/>
<evidence type="ECO:0000269" key="6">
    <source>
    </source>
</evidence>
<evidence type="ECO:0000269" key="7">
    <source>
    </source>
</evidence>
<evidence type="ECO:0000269" key="8">
    <source>
    </source>
</evidence>
<evidence type="ECO:0000305" key="9"/>
<gene>
    <name type="primary">CD36</name>
    <name type="synonym">PAS4</name>
</gene>
<comment type="function">
    <text evidence="2 3 4">Multifunctional glycoprotein that acts as a receptor for a broad range of ligands. Ligands can be of proteinaceous nature like thrombospondin, fibronectin, collagen or amyloid-beta as well as of lipidic nature such as oxidized low-density lipoprotein (oxLDL), anionic phospholipids, long-chain fatty acids and bacterial diacylated lipopeptides. They are generally multivalent and can therefore engage multiple receptors simultaneously, the resulting formation of CD36 clusters initiates signal transduction and internalization of receptor-ligand complexes. The dependency on coreceptor signaling is strongly ligand specific. Cellular responses to these ligands are involved in angiogenesis, inflammatory response, fatty acid metabolism, taste and dietary fat processing in the intestine (By similarity). Binds long-chain fatty acids and facilitates their transport into cells, thus participating in muscle lipid utilization, adipose energy storage, and gut fat absorption (By similarity). Mechanistically, binding of fatty acids activates downstream kinase LYN, which phosphorylates the palmitoyltransferase ZDHHC5 and inactivates it, resulting in the subsequent depalmitoylation of CD36 and caveolar endocytosis (By similarity). In the small intestine, plays a role in proximal absorption of dietary fatty acid and cholesterol for optimal chylomicron formation, possibly through the activation of MAPK1/3 (ERK1/2) signaling pathway (By similarity). Involved in oral fat perception and preferences (By similarity). Detection into the tongue of long-chain fatty acids leads to a rapid and sustained rise in flux and protein content of pancreatobiliary secretions (By similarity). In taste receptor cells, mediates the induction of an increase in intracellular calcium levels by long-chain fatty acids, leading to the activation of the gustatory neurons in the nucleus of the solitary tract (By similarity). Important factor in both ventromedial hypothalamus neuronal sensing of long-chain fatty acid and the regulation of energy and glucose homeostasis (By similarity). Receptor for thrombospondins, THBS1 and THBS2, mediating their antiangiogenic effects (By similarity). As a coreceptor for TLR4:TLR6 heterodimer, promotes inflammation in monocytes/macrophages. Upon ligand binding, such as oxLDL or amyloid-beta 42, interacts with the heterodimer TLR4:TLR6, the complex is internalized and triggers inflammatory response, leading to NF-kappa-B-dependent production of CXCL1, CXCL2 and CCL9 cytokines, via MYD88 signaling pathway, and CCL5 cytokine, via TICAM1 signaling pathway, as well as IL1B secretion, through the priming and activation of the NLRP3 inflammasome. Selective and nonredundant sensor of microbial diacylated lipopeptide that signal via TLR2:TLR6 heterodimer, this cluster triggers signaling from the cell surface, leading to the NF-kappa-B-dependent production of TNF, via MYD88 signaling pathway and subsequently is targeted to the Golgi in a lipid-raft dependent pathway (By similarity).</text>
</comment>
<comment type="catalytic activity">
    <reaction evidence="2">
        <text>butanoate(out) = butanoate(in)</text>
        <dbReference type="Rhea" id="RHEA:45248"/>
        <dbReference type="ChEBI" id="CHEBI:17968"/>
    </reaction>
    <physiologicalReaction direction="left-to-right" evidence="2">
        <dbReference type="Rhea" id="RHEA:45249"/>
    </physiologicalReaction>
</comment>
<comment type="catalytic activity">
    <reaction evidence="2">
        <text>(9Z)-octadecenoate(out) = (9Z)-octadecenoate(in)</text>
        <dbReference type="Rhea" id="RHEA:33655"/>
        <dbReference type="ChEBI" id="CHEBI:30823"/>
    </reaction>
    <physiologicalReaction direction="left-to-right" evidence="2">
        <dbReference type="Rhea" id="RHEA:33656"/>
    </physiologicalReaction>
</comment>
<comment type="catalytic activity">
    <reaction evidence="2">
        <text>(9Z,12Z)-octadecadienoate(out) = (9Z,12Z)-octadecadienoate(in)</text>
        <dbReference type="Rhea" id="RHEA:45264"/>
        <dbReference type="ChEBI" id="CHEBI:30245"/>
    </reaction>
    <physiologicalReaction direction="left-to-right" evidence="2">
        <dbReference type="Rhea" id="RHEA:45265"/>
    </physiologicalReaction>
</comment>
<comment type="catalytic activity">
    <reaction evidence="2">
        <text>tetradecanoate(out) = tetradecanoate(in)</text>
        <dbReference type="Rhea" id="RHEA:45252"/>
        <dbReference type="ChEBI" id="CHEBI:30807"/>
    </reaction>
    <physiologicalReaction direction="left-to-right" evidence="2">
        <dbReference type="Rhea" id="RHEA:45253"/>
    </physiologicalReaction>
</comment>
<comment type="catalytic activity">
    <reaction evidence="2">
        <text>hexadecanoate(out) = hexadecanoate(in)</text>
        <dbReference type="Rhea" id="RHEA:45256"/>
        <dbReference type="ChEBI" id="CHEBI:7896"/>
    </reaction>
    <physiologicalReaction direction="left-to-right" evidence="2">
        <dbReference type="Rhea" id="RHEA:45257"/>
    </physiologicalReaction>
</comment>
<comment type="catalytic activity">
    <reaction evidence="2">
        <text>tetracosanoate(out) = tetracosanoate(in)</text>
        <dbReference type="Rhea" id="RHEA:45260"/>
        <dbReference type="ChEBI" id="CHEBI:31014"/>
    </reaction>
    <physiologicalReaction direction="left-to-right" evidence="2">
        <dbReference type="Rhea" id="RHEA:45261"/>
    </physiologicalReaction>
</comment>
<comment type="subunit">
    <text evidence="2 4">Interacts with THBS1 and THBS2; the interactions mediate the THBS antiangiogenic activity. Upon interaction with a ligand, such as oxidized low-density lipoprotein (oxLDL) or amyloid-beta 42, rapidly forms a complex with TLR4 and TLR6; the complex is internalized and triggers an inflammatory signal. Through its C-terminus, interacts with PTK2, PXN and LYN, but not with SRC. LYN kinase activity is required for facilitating TLR4:TLR6 heterodimerization and signal initiation. Upon interaction with ligands such as diacylated lipopeptides, interacts with the TLR2:TLR6 heterodimer (By similarity). Interacts with CD9, CD81, FCER1G, ITGB2 and/or ITGB2; forming a membrane heteromeric complex required for the internalization of CD36 and its ligands (By similarity). Interacts (when palmitoylated) with ARF6; this interaction mediates CD36 transport to the plasma membrane (By similarity).</text>
</comment>
<comment type="subcellular location">
    <subcellularLocation>
        <location evidence="2">Cell membrane</location>
        <topology evidence="5">Multi-pass membrane protein</topology>
    </subcellularLocation>
    <subcellularLocation>
        <location evidence="2">Membrane raft</location>
    </subcellularLocation>
    <subcellularLocation>
        <location evidence="2">Golgi apparatus</location>
    </subcellularLocation>
    <subcellularLocation>
        <location evidence="4">Apical cell membrane</location>
    </subcellularLocation>
    <text evidence="2">Upon ligand-binding, internalized through dynamin-dependent endocytosis.</text>
</comment>
<comment type="PTM">
    <text evidence="2">Palmitoylated by ZDHHC5. Palmitoylation is required for proper localization at the plasma membrane.</text>
</comment>
<comment type="PTM">
    <text evidence="2 4">Ubiquitinated at Lys-469. Ubiquitination is induced by fatty acids such as oleic acid and leads to degradation by the proteasome. Ubiquitination and degradation are inhibited by insulin which blocks the effect of fatty acids.</text>
</comment>
<comment type="similarity">
    <text evidence="9">Belongs to the CD36 family.</text>
</comment>
<proteinExistence type="evidence at protein level"/>
<sequence length="472" mass="52940">MGCNRNCGLIAGAVIGAVLAVFGGILMPVGDMLIEKTIKKEVVLEEGTIAFKNWVKTGTDVYRQFWIFDVQNPDEVTVNSSKIKVKQRGPYTYRVRYLAKENITQDPETHTVSFLQPNGAIFEPSLSVGTEDDTFTILNLAVAAAPQLYPNTFMQGILNSFIKKSKSSMFQNRTLKELLWGYTDPFLNLVPYPITTTIGVFYPYNNTADGIYKVFNGKDDISKVAIIDTYKGRKNLSYWSSYCDLINGTDAASFPPFVEKTRVLQFFSSDICRSIYAVFGAEINLKGIPVYRFILPSFAFASPFQNPDNHCFCTEKIISKNCTLYGVLDIGKCKEGKPVYISLPHFLHGSPELAEPIESLSPNEEEHSTYLDVEPITGFTLRFAKRLQVNMLVKPAKKIEALKNLKHNYIVPILWLNETGTIGDEKAEMFRNQVTGKINLLGLVEIVLLSVGVVMFIAFMISYCACRSKRVN</sequence>
<accession>P26201</accession>
<accession>P79111</accession>
<accession>Q28154</accession>
<accession>Q3ZBT7</accession>
<dbReference type="EMBL" id="D45364">
    <property type="protein sequence ID" value="BAA08224.1"/>
    <property type="molecule type" value="mRNA"/>
</dbReference>
<dbReference type="EMBL" id="X91503">
    <property type="protein sequence ID" value="CAA62803.1"/>
    <property type="molecule type" value="mRNA"/>
</dbReference>
<dbReference type="EMBL" id="BC103112">
    <property type="protein sequence ID" value="AAI03113.1"/>
    <property type="molecule type" value="mRNA"/>
</dbReference>
<dbReference type="RefSeq" id="NP_001265550.1">
    <property type="nucleotide sequence ID" value="NM_001278621.1"/>
</dbReference>
<dbReference type="RefSeq" id="NP_776435.2">
    <property type="nucleotide sequence ID" value="NM_174010.3"/>
</dbReference>
<dbReference type="RefSeq" id="XP_005205381.1">
    <property type="nucleotide sequence ID" value="XM_005205324.3"/>
</dbReference>
<dbReference type="RefSeq" id="XP_005205382.1">
    <property type="nucleotide sequence ID" value="XM_005205325.3"/>
</dbReference>
<dbReference type="RefSeq" id="XP_005205383.1">
    <property type="nucleotide sequence ID" value="XM_005205326.5"/>
</dbReference>
<dbReference type="RefSeq" id="XP_010802458.1">
    <property type="nucleotide sequence ID" value="XM_010804156.2"/>
</dbReference>
<dbReference type="RefSeq" id="XP_010802459.1">
    <property type="nucleotide sequence ID" value="XM_010804157.2"/>
</dbReference>
<dbReference type="RefSeq" id="XP_015324298.1">
    <property type="nucleotide sequence ID" value="XM_015468812.3"/>
</dbReference>
<dbReference type="RefSeq" id="XP_015324300.1">
    <property type="nucleotide sequence ID" value="XM_015468814.1"/>
</dbReference>
<dbReference type="RefSeq" id="XP_015324301.1">
    <property type="nucleotide sequence ID" value="XM_015468815.3"/>
</dbReference>
<dbReference type="RefSeq" id="XP_015324304.1">
    <property type="nucleotide sequence ID" value="XM_015468818.3"/>
</dbReference>
<dbReference type="RefSeq" id="XP_024846185.1">
    <property type="nucleotide sequence ID" value="XM_024990417.2"/>
</dbReference>
<dbReference type="RefSeq" id="XP_024846186.1">
    <property type="nucleotide sequence ID" value="XM_024990418.2"/>
</dbReference>
<dbReference type="RefSeq" id="XP_024846187.1">
    <property type="nucleotide sequence ID" value="XM_024990419.2"/>
</dbReference>
<dbReference type="RefSeq" id="XP_024846189.1">
    <property type="nucleotide sequence ID" value="XM_024990421.2"/>
</dbReference>
<dbReference type="RefSeq" id="XP_024846195.1">
    <property type="nucleotide sequence ID" value="XM_024990427.2"/>
</dbReference>
<dbReference type="RefSeq" id="XP_024846196.1">
    <property type="nucleotide sequence ID" value="XM_024990428.2"/>
</dbReference>
<dbReference type="RefSeq" id="XP_024846197.1">
    <property type="nucleotide sequence ID" value="XM_024990429.2"/>
</dbReference>
<dbReference type="RefSeq" id="XP_024846198.1">
    <property type="nucleotide sequence ID" value="XM_024990430.2"/>
</dbReference>
<dbReference type="RefSeq" id="XP_024846199.1">
    <property type="nucleotide sequence ID" value="XM_024990431.2"/>
</dbReference>
<dbReference type="RefSeq" id="XP_024846201.1">
    <property type="nucleotide sequence ID" value="XM_024990433.2"/>
</dbReference>
<dbReference type="RefSeq" id="XP_024846202.1">
    <property type="nucleotide sequence ID" value="XM_024990434.2"/>
</dbReference>
<dbReference type="RefSeq" id="XP_059741364.1">
    <property type="nucleotide sequence ID" value="XM_059885381.1"/>
</dbReference>
<dbReference type="RefSeq" id="XP_059741365.1">
    <property type="nucleotide sequence ID" value="XM_059885382.1"/>
</dbReference>
<dbReference type="RefSeq" id="XP_059741366.1">
    <property type="nucleotide sequence ID" value="XM_059885383.1"/>
</dbReference>
<dbReference type="RefSeq" id="XP_059741367.1">
    <property type="nucleotide sequence ID" value="XM_059885384.1"/>
</dbReference>
<dbReference type="RefSeq" id="XP_059741368.1">
    <property type="nucleotide sequence ID" value="XM_059885385.1"/>
</dbReference>
<dbReference type="RefSeq" id="XP_059741369.1">
    <property type="nucleotide sequence ID" value="XM_059885386.1"/>
</dbReference>
<dbReference type="RefSeq" id="XP_059741370.1">
    <property type="nucleotide sequence ID" value="XM_059885387.1"/>
</dbReference>
<dbReference type="RefSeq" id="XP_059741371.1">
    <property type="nucleotide sequence ID" value="XM_059885388.1"/>
</dbReference>
<dbReference type="RefSeq" id="XP_059741372.1">
    <property type="nucleotide sequence ID" value="XM_059885389.1"/>
</dbReference>
<dbReference type="SMR" id="P26201"/>
<dbReference type="FunCoup" id="P26201">
    <property type="interactions" value="426"/>
</dbReference>
<dbReference type="STRING" id="9913.ENSBTAP00000066341"/>
<dbReference type="CarbonylDB" id="P26201"/>
<dbReference type="GlyConnect" id="506">
    <property type="glycosylation" value="37 N-Linked glycans"/>
</dbReference>
<dbReference type="GlyCosmos" id="P26201">
    <property type="glycosylation" value="8 sites, 64 glycans"/>
</dbReference>
<dbReference type="GlyGen" id="P26201">
    <property type="glycosylation" value="9 sites, 64 N-linked glycans (1 site)"/>
</dbReference>
<dbReference type="iPTMnet" id="P26201"/>
<dbReference type="SwissPalm" id="P26201"/>
<dbReference type="PaxDb" id="9913-ENSBTAP00000023750"/>
<dbReference type="PeptideAtlas" id="P26201"/>
<dbReference type="Ensembl" id="ENSBTAT00000023750.7">
    <property type="protein sequence ID" value="ENSBTAP00000023750.5"/>
    <property type="gene ID" value="ENSBTAG00000017866.7"/>
</dbReference>
<dbReference type="GeneID" id="281052"/>
<dbReference type="KEGG" id="bta:281052"/>
<dbReference type="CTD" id="948"/>
<dbReference type="VEuPathDB" id="HostDB:ENSBTAG00000017866"/>
<dbReference type="eggNOG" id="KOG3776">
    <property type="taxonomic scope" value="Eukaryota"/>
</dbReference>
<dbReference type="GeneTree" id="ENSGT00940000153372"/>
<dbReference type="HOGENOM" id="CLU_019853_0_0_1"/>
<dbReference type="InParanoid" id="P26201"/>
<dbReference type="OMA" id="AFQNWLV"/>
<dbReference type="OrthoDB" id="195015at2759"/>
<dbReference type="TreeFam" id="TF317925"/>
<dbReference type="Reactome" id="R-BTA-114608">
    <property type="pathway name" value="Platelet degranulation"/>
</dbReference>
<dbReference type="Reactome" id="R-BTA-1236973">
    <property type="pathway name" value="Cross-presentation of particulate exogenous antigens (phagosomes)"/>
</dbReference>
<dbReference type="Reactome" id="R-BTA-3000471">
    <property type="pathway name" value="Scavenging by Class B Receptors"/>
</dbReference>
<dbReference type="Reactome" id="R-BTA-434313">
    <property type="pathway name" value="Intracellular metabolism of fatty acids regulates insulin secretion"/>
</dbReference>
<dbReference type="Reactome" id="R-BTA-5686938">
    <property type="pathway name" value="Regulation of TLR by endogenous ligand"/>
</dbReference>
<dbReference type="Reactome" id="R-BTA-6798695">
    <property type="pathway name" value="Neutrophil degranulation"/>
</dbReference>
<dbReference type="Proteomes" id="UP000009136">
    <property type="component" value="Chromosome 4"/>
</dbReference>
<dbReference type="Bgee" id="ENSBTAG00000017866">
    <property type="expression patterns" value="Expressed in omental fat pad and 103 other cell types or tissues"/>
</dbReference>
<dbReference type="GO" id="GO:0016324">
    <property type="term" value="C:apical plasma membrane"/>
    <property type="evidence" value="ECO:0007669"/>
    <property type="project" value="UniProtKB-SubCell"/>
</dbReference>
<dbReference type="GO" id="GO:0031526">
    <property type="term" value="C:brush border membrane"/>
    <property type="evidence" value="ECO:0000250"/>
    <property type="project" value="UniProtKB"/>
</dbReference>
<dbReference type="GO" id="GO:0005901">
    <property type="term" value="C:caveola"/>
    <property type="evidence" value="ECO:0000318"/>
    <property type="project" value="GO_Central"/>
</dbReference>
<dbReference type="GO" id="GO:0009986">
    <property type="term" value="C:cell surface"/>
    <property type="evidence" value="ECO:0000318"/>
    <property type="project" value="GO_Central"/>
</dbReference>
<dbReference type="GO" id="GO:0005794">
    <property type="term" value="C:Golgi apparatus"/>
    <property type="evidence" value="ECO:0000250"/>
    <property type="project" value="UniProtKB"/>
</dbReference>
<dbReference type="GO" id="GO:0016020">
    <property type="term" value="C:membrane"/>
    <property type="evidence" value="ECO:0000250"/>
    <property type="project" value="UniProtKB"/>
</dbReference>
<dbReference type="GO" id="GO:0045121">
    <property type="term" value="C:membrane raft"/>
    <property type="evidence" value="ECO:0000250"/>
    <property type="project" value="UniProtKB"/>
</dbReference>
<dbReference type="GO" id="GO:0030169">
    <property type="term" value="F:low-density lipoprotein particle binding"/>
    <property type="evidence" value="ECO:0000318"/>
    <property type="project" value="GO_Central"/>
</dbReference>
<dbReference type="GO" id="GO:0005041">
    <property type="term" value="F:low-density lipoprotein particle receptor activity"/>
    <property type="evidence" value="ECO:0000318"/>
    <property type="project" value="GO_Central"/>
</dbReference>
<dbReference type="GO" id="GO:0005044">
    <property type="term" value="F:scavenger receptor activity"/>
    <property type="evidence" value="ECO:0000318"/>
    <property type="project" value="GO_Central"/>
</dbReference>
<dbReference type="GO" id="GO:1990000">
    <property type="term" value="P:amyloid fibril formation"/>
    <property type="evidence" value="ECO:0000250"/>
    <property type="project" value="UniProtKB"/>
</dbReference>
<dbReference type="GO" id="GO:0150094">
    <property type="term" value="P:amyloid-beta clearance by cellular catabolic process"/>
    <property type="evidence" value="ECO:0000318"/>
    <property type="project" value="GO_Central"/>
</dbReference>
<dbReference type="GO" id="GO:0007155">
    <property type="term" value="P:cell adhesion"/>
    <property type="evidence" value="ECO:0007669"/>
    <property type="project" value="UniProtKB-KW"/>
</dbReference>
<dbReference type="GO" id="GO:0071726">
    <property type="term" value="P:cellular response to diacyl bacterial lipopeptide"/>
    <property type="evidence" value="ECO:0000250"/>
    <property type="project" value="UniProtKB"/>
</dbReference>
<dbReference type="GO" id="GO:0071404">
    <property type="term" value="P:cellular response to low-density lipoprotein particle stimulus"/>
    <property type="evidence" value="ECO:0000250"/>
    <property type="project" value="UniProtKB"/>
</dbReference>
<dbReference type="GO" id="GO:0070508">
    <property type="term" value="P:cholesterol import"/>
    <property type="evidence" value="ECO:0000250"/>
    <property type="project" value="UniProtKB"/>
</dbReference>
<dbReference type="GO" id="GO:0097009">
    <property type="term" value="P:energy homeostasis"/>
    <property type="evidence" value="ECO:0000250"/>
    <property type="project" value="UniProtKB"/>
</dbReference>
<dbReference type="GO" id="GO:0050892">
    <property type="term" value="P:intestinal absorption"/>
    <property type="evidence" value="ECO:0000250"/>
    <property type="project" value="UniProtKB"/>
</dbReference>
<dbReference type="GO" id="GO:0030299">
    <property type="term" value="P:intestinal cholesterol absorption"/>
    <property type="evidence" value="ECO:0000250"/>
    <property type="project" value="UniProtKB"/>
</dbReference>
<dbReference type="GO" id="GO:0019915">
    <property type="term" value="P:lipid storage"/>
    <property type="evidence" value="ECO:0000318"/>
    <property type="project" value="GO_Central"/>
</dbReference>
<dbReference type="GO" id="GO:0042953">
    <property type="term" value="P:lipoprotein transport"/>
    <property type="evidence" value="ECO:0000318"/>
    <property type="project" value="GO_Central"/>
</dbReference>
<dbReference type="GO" id="GO:0044539">
    <property type="term" value="P:long-chain fatty acid import into cell"/>
    <property type="evidence" value="ECO:0000250"/>
    <property type="project" value="UniProtKB"/>
</dbReference>
<dbReference type="GO" id="GO:0034383">
    <property type="term" value="P:low-density lipoprotein particle clearance"/>
    <property type="evidence" value="ECO:0000318"/>
    <property type="project" value="GO_Central"/>
</dbReference>
<dbReference type="GO" id="GO:0007204">
    <property type="term" value="P:positive regulation of cytosolic calcium ion concentration"/>
    <property type="evidence" value="ECO:0000250"/>
    <property type="project" value="UniProtKB"/>
</dbReference>
<dbReference type="GO" id="GO:0070374">
    <property type="term" value="P:positive regulation of ERK1 and ERK2 cascade"/>
    <property type="evidence" value="ECO:0000250"/>
    <property type="project" value="UniProtKB"/>
</dbReference>
<dbReference type="GO" id="GO:0032731">
    <property type="term" value="P:positive regulation of interleukin-1 beta production"/>
    <property type="evidence" value="ECO:0000250"/>
    <property type="project" value="UniProtKB"/>
</dbReference>
<dbReference type="GO" id="GO:1900227">
    <property type="term" value="P:positive regulation of NLRP3 inflammasome complex assembly"/>
    <property type="evidence" value="ECO:0000250"/>
    <property type="project" value="UniProtKB"/>
</dbReference>
<dbReference type="GO" id="GO:0031623">
    <property type="term" value="P:receptor internalization"/>
    <property type="evidence" value="ECO:0000250"/>
    <property type="project" value="UniProtKB"/>
</dbReference>
<dbReference type="GO" id="GO:0006898">
    <property type="term" value="P:receptor-mediated endocytosis"/>
    <property type="evidence" value="ECO:0000318"/>
    <property type="project" value="GO_Central"/>
</dbReference>
<dbReference type="GO" id="GO:0070542">
    <property type="term" value="P:response to fatty acid"/>
    <property type="evidence" value="ECO:0000250"/>
    <property type="project" value="UniProtKB"/>
</dbReference>
<dbReference type="GO" id="GO:0070543">
    <property type="term" value="P:response to linoleic acid"/>
    <property type="evidence" value="ECO:0000250"/>
    <property type="project" value="UniProtKB"/>
</dbReference>
<dbReference type="GO" id="GO:0033993">
    <property type="term" value="P:response to lipid"/>
    <property type="evidence" value="ECO:0000250"/>
    <property type="project" value="UniProtKB"/>
</dbReference>
<dbReference type="GO" id="GO:0050909">
    <property type="term" value="P:sensory perception of taste"/>
    <property type="evidence" value="ECO:0000250"/>
    <property type="project" value="UniProtKB"/>
</dbReference>
<dbReference type="GO" id="GO:0034197">
    <property type="term" value="P:triglyceride transport"/>
    <property type="evidence" value="ECO:0000250"/>
    <property type="project" value="UniProtKB"/>
</dbReference>
<dbReference type="InterPro" id="IPR005428">
    <property type="entry name" value="CD36/SCARB1/SNMP1"/>
</dbReference>
<dbReference type="InterPro" id="IPR002159">
    <property type="entry name" value="CD36_fam"/>
</dbReference>
<dbReference type="PANTHER" id="PTHR11923:SF12">
    <property type="entry name" value="PLATELET GLYCOPROTEIN 4"/>
    <property type="match status" value="1"/>
</dbReference>
<dbReference type="PANTHER" id="PTHR11923">
    <property type="entry name" value="SCAVENGER RECEPTOR CLASS B TYPE-1 SR-B1"/>
    <property type="match status" value="1"/>
</dbReference>
<dbReference type="Pfam" id="PF01130">
    <property type="entry name" value="CD36"/>
    <property type="match status" value="1"/>
</dbReference>
<dbReference type="PRINTS" id="PR01610">
    <property type="entry name" value="CD36ANTIGEN"/>
</dbReference>
<dbReference type="PRINTS" id="PR01609">
    <property type="entry name" value="CD36FAMILY"/>
</dbReference>
<feature type="initiator methionine" description="Removed" evidence="6">
    <location>
        <position position="1"/>
    </location>
</feature>
<feature type="chain" id="PRO_0000144150" description="Platelet glycoprotein 4">
    <location>
        <begin position="2"/>
        <end position="472"/>
    </location>
</feature>
<feature type="topological domain" description="Cytoplasmic" evidence="5">
    <location>
        <begin position="2"/>
        <end position="7"/>
    </location>
</feature>
<feature type="transmembrane region" description="Helical" evidence="5">
    <location>
        <begin position="8"/>
        <end position="29"/>
    </location>
</feature>
<feature type="topological domain" description="Extracellular" evidence="5">
    <location>
        <begin position="30"/>
        <end position="439"/>
    </location>
</feature>
<feature type="transmembrane region" description="Helical" evidence="5">
    <location>
        <begin position="440"/>
        <end position="461"/>
    </location>
</feature>
<feature type="topological domain" description="Cytoplasmic" evidence="5">
    <location>
        <begin position="462"/>
        <end position="472"/>
    </location>
</feature>
<feature type="region of interest" description="Required for interaction with thrombospondins, THBS1 and THBS2">
    <location>
        <begin position="93"/>
        <end position="120"/>
    </location>
</feature>
<feature type="region of interest" description="Interaction with PTK2, PXN and LYN" evidence="2">
    <location>
        <begin position="460"/>
        <end position="472"/>
    </location>
</feature>
<feature type="site" description="Critical for TLR4-TLR6 dimerization and signaling" evidence="2">
    <location>
        <position position="463"/>
    </location>
</feature>
<feature type="lipid moiety-binding region" description="S-palmitoyl cysteine" evidence="1">
    <location>
        <position position="3"/>
    </location>
</feature>
<feature type="lipid moiety-binding region" description="S-palmitoyl cysteine" evidence="1">
    <location>
        <position position="7"/>
    </location>
</feature>
<feature type="lipid moiety-binding region" description="S-palmitoyl cysteine" evidence="1">
    <location>
        <position position="464"/>
    </location>
</feature>
<feature type="lipid moiety-binding region" description="S-palmitoyl cysteine" evidence="1">
    <location>
        <position position="466"/>
    </location>
</feature>
<feature type="glycosylation site" description="N-linked (GlcNAc...) asparagine" evidence="7">
    <location>
        <position position="79"/>
    </location>
</feature>
<feature type="glycosylation site" description="N-linked (GlcNAc...) asparagine" evidence="7">
    <location>
        <position position="102"/>
    </location>
</feature>
<feature type="glycosylation site" description="N-linked (GlcNAc...) asparagine" evidence="7">
    <location>
        <position position="172"/>
    </location>
</feature>
<feature type="glycosylation site" description="N-linked (GlcNAc...) asparagine" evidence="7">
    <location>
        <position position="205"/>
    </location>
</feature>
<feature type="glycosylation site" description="N-linked (GlcNAc...) asparagine" evidence="7">
    <location>
        <position position="235"/>
    </location>
</feature>
<feature type="glycosylation site" description="N-linked (GlcNAc...) asparagine" evidence="7">
    <location>
        <position position="247"/>
    </location>
</feature>
<feature type="glycosylation site" description="N-linked (GlcNAc...) asparagine" evidence="7">
    <location>
        <position position="321"/>
    </location>
</feature>
<feature type="glycosylation site" description="N-linked (GlcNAc...) asparagine" evidence="7">
    <location>
        <position position="417"/>
    </location>
</feature>
<feature type="disulfide bond" evidence="8">
    <location>
        <begin position="243"/>
        <end position="311"/>
    </location>
</feature>
<feature type="disulfide bond" evidence="8">
    <location>
        <begin position="272"/>
        <end position="333"/>
    </location>
</feature>
<feature type="disulfide bond" evidence="8">
    <location>
        <begin position="313"/>
        <end position="322"/>
    </location>
</feature>
<feature type="cross-link" description="Glycyl lysine isopeptide (Lys-Gly) (interchain with G-Cter in ubiquitin)" evidence="2">
    <location>
        <position position="469"/>
    </location>
</feature>
<feature type="sequence conflict" description="In Ref. 2; CAA62803." evidence="9" ref="2">
    <original>K</original>
    <variation>N</variation>
    <location>
        <position position="39"/>
    </location>
</feature>
<feature type="sequence conflict" description="In Ref. 1; BAA08224." evidence="9" ref="1">
    <original>H</original>
    <variation>N</variation>
    <location>
        <position position="110"/>
    </location>
</feature>
<feature type="sequence conflict" description="In Ref. 1; BAA08224." evidence="9" ref="1">
    <original>S</original>
    <variation>L</variation>
    <location>
        <position position="125"/>
    </location>
</feature>
<feature type="sequence conflict" description="In Ref. 1; BAA08224." evidence="9" ref="1">
    <original>T</original>
    <variation>K</variation>
    <location>
        <position position="134"/>
    </location>
</feature>
<feature type="sequence conflict" description="In Ref. 1; BAA08224." evidence="9" ref="1">
    <original>F</original>
    <variation>L</variation>
    <location>
        <position position="257"/>
    </location>
</feature>
<feature type="sequence conflict" description="In Ref. 1; BAA08224." evidence="9" ref="1">
    <original>I</original>
    <variation>V</variation>
    <location>
        <position position="294"/>
    </location>
</feature>
<feature type="sequence conflict" description="In Ref. 1; BAA08224." evidence="9" ref="1">
    <original>Q</original>
    <variation>E</variation>
    <location>
        <position position="305"/>
    </location>
</feature>
<feature type="sequence conflict" description="In Ref. 1; BAA08224." evidence="9" ref="1">
    <original>S</original>
    <variation>G</variation>
    <location>
        <position position="359"/>
    </location>
</feature>
<feature type="sequence conflict" description="In Ref. 1; BAA08224." evidence="9" ref="1">
    <original>MLVKPA</original>
    <variation>TGQARQ</variation>
    <location>
        <begin position="391"/>
        <end position="396"/>
    </location>
</feature>
<feature type="sequence conflict" description="In Ref. 1; BAA08224." evidence="9" ref="1">
    <original>C</original>
    <variation>Y</variation>
    <location>
        <position position="466"/>
    </location>
</feature>
<feature type="sequence conflict" description="In Ref. 1; BAA08224." evidence="9" ref="1">
    <original>RVN</original>
    <variation>TIK</variation>
    <location>
        <begin position="470"/>
        <end position="472"/>
    </location>
</feature>
<name>CD36_BOVIN</name>
<organism>
    <name type="scientific">Bos taurus</name>
    <name type="common">Bovine</name>
    <dbReference type="NCBI Taxonomy" id="9913"/>
    <lineage>
        <taxon>Eukaryota</taxon>
        <taxon>Metazoa</taxon>
        <taxon>Chordata</taxon>
        <taxon>Craniata</taxon>
        <taxon>Vertebrata</taxon>
        <taxon>Euteleostomi</taxon>
        <taxon>Mammalia</taxon>
        <taxon>Eutheria</taxon>
        <taxon>Laurasiatheria</taxon>
        <taxon>Artiodactyla</taxon>
        <taxon>Ruminantia</taxon>
        <taxon>Pecora</taxon>
        <taxon>Bovidae</taxon>
        <taxon>Bovinae</taxon>
        <taxon>Bos</taxon>
    </lineage>
</organism>
<reference key="1">
    <citation type="submission" date="1995-02" db="EMBL/GenBank/DDBJ databases">
        <title>cDNA cloning of PAS-4 from bovine fat globule membrane.</title>
        <authorList>
            <person name="Hwangbo S."/>
            <person name="Ametani M."/>
            <person name="Kanno C."/>
        </authorList>
    </citation>
    <scope>NUCLEOTIDE SEQUENCE [MRNA]</scope>
    <source>
        <strain>Holstein</strain>
        <tissue>Mammary gland</tissue>
    </source>
</reference>
<reference key="2">
    <citation type="journal article" date="1996" name="Biochim. Biophys. Acta">
        <title>Structural characterization of bovine CD36 from the milk fat globule membrane.</title>
        <authorList>
            <person name="Berglund L."/>
            <person name="Petersen T.E."/>
            <person name="Ramussen J.T."/>
        </authorList>
    </citation>
    <scope>NUCLEOTIDE SEQUENCE [MRNA]</scope>
    <scope>GLYCOSYLATION AT ASN-79; ASN-102; ASN-172; ASN-205; ASN-235; ASN-247; ASN-321 AND ASN-417</scope>
    <source>
        <tissue>Mammary gland</tissue>
    </source>
</reference>
<reference key="3">
    <citation type="submission" date="2005-08" db="EMBL/GenBank/DDBJ databases">
        <authorList>
            <consortium name="NIH - Mammalian Gene Collection (MGC) project"/>
        </authorList>
    </citation>
    <scope>NUCLEOTIDE SEQUENCE [LARGE SCALE MRNA]</scope>
    <source>
        <strain>Hereford</strain>
        <tissue>Heart ventricle</tissue>
    </source>
</reference>
<reference key="4">
    <citation type="journal article" date="1990" name="J. Biol. Chem.">
        <title>Structural, functional, and antigenic differences between bovine heart endothelial CD36 and human platelet CD36.</title>
        <authorList>
            <person name="Greenwalt D.E."/>
            <person name="Watt K.W.K."/>
            <person name="Hasler T."/>
            <person name="Howard R.J."/>
            <person name="Patel S."/>
        </authorList>
    </citation>
    <scope>PROTEIN SEQUENCE OF 2-22</scope>
    <scope>FUNCTION</scope>
    <source>
        <tissue>Heart</tissue>
    </source>
</reference>
<reference key="5">
    <citation type="journal article" date="1990" name="Biochemistry">
        <title>PAS IV, an integral membrane protein of mammary epithelial cells, is related to platelet and endothelial cell CD36 (GP IV).</title>
        <authorList>
            <person name="Greenwalt D.E."/>
            <person name="Watt K.W."/>
            <person name="So O.Y."/>
            <person name="Jiwani N."/>
        </authorList>
    </citation>
    <scope>PROTEIN SEQUENCE OF 4-22 AND 214-223</scope>
    <source>
        <tissue>Mammary epithelium</tissue>
    </source>
</reference>
<reference key="6">
    <citation type="journal article" date="1998" name="Eur. J. Biochem.">
        <title>Assignment of disulfide bridges in bovine CD36.</title>
        <authorList>
            <person name="Rasmussen J.T."/>
            <person name="Berglund L."/>
            <person name="Rasmussen M.S."/>
            <person name="Petersen T.E."/>
        </authorList>
    </citation>
    <scope>DISULFIDE BONDS</scope>
    <source>
        <tissue>Milk</tissue>
    </source>
</reference>
<protein>
    <recommendedName>
        <fullName>Platelet glycoprotein 4</fullName>
    </recommendedName>
    <alternativeName>
        <fullName>Glycoprotein IIIb</fullName>
        <shortName>GPIIIB</shortName>
    </alternativeName>
    <alternativeName>
        <fullName>PAS IV</fullName>
    </alternativeName>
    <alternativeName>
        <fullName>PAS-4</fullName>
    </alternativeName>
    <alternativeName>
        <fullName>Platelet glycoprotein IV</fullName>
        <shortName>GPIV</shortName>
    </alternativeName>
    <cdAntigenName>CD36</cdAntigenName>
</protein>
<keyword id="KW-0130">Cell adhesion</keyword>
<keyword id="KW-1003">Cell membrane</keyword>
<keyword id="KW-0903">Direct protein sequencing</keyword>
<keyword id="KW-1015">Disulfide bond</keyword>
<keyword id="KW-0325">Glycoprotein</keyword>
<keyword id="KW-0333">Golgi apparatus</keyword>
<keyword id="KW-1017">Isopeptide bond</keyword>
<keyword id="KW-0445">Lipid transport</keyword>
<keyword id="KW-0449">Lipoprotein</keyword>
<keyword id="KW-0472">Membrane</keyword>
<keyword id="KW-0564">Palmitate</keyword>
<keyword id="KW-0675">Receptor</keyword>
<keyword id="KW-1185">Reference proteome</keyword>
<keyword id="KW-0812">Transmembrane</keyword>
<keyword id="KW-1133">Transmembrane helix</keyword>
<keyword id="KW-0813">Transport</keyword>
<keyword id="KW-0832">Ubl conjugation</keyword>